<feature type="initiator methionine" description="Removed" evidence="5">
    <location>
        <position position="1"/>
    </location>
</feature>
<feature type="chain" id="PRO_0000203696" description="Guanine nucleotide-binding protein G(z) subunit alpha">
    <location>
        <begin position="2"/>
        <end position="355"/>
    </location>
</feature>
<feature type="domain" description="G-alpha" evidence="2">
    <location>
        <begin position="32"/>
        <end position="355"/>
    </location>
</feature>
<feature type="region of interest" description="Disordered" evidence="3">
    <location>
        <begin position="1"/>
        <end position="26"/>
    </location>
</feature>
<feature type="region of interest" description="G1 motif" evidence="2">
    <location>
        <begin position="35"/>
        <end position="48"/>
    </location>
</feature>
<feature type="region of interest" description="G2 motif" evidence="2">
    <location>
        <begin position="174"/>
        <end position="182"/>
    </location>
</feature>
<feature type="region of interest" description="G3 motif" evidence="2">
    <location>
        <begin position="197"/>
        <end position="206"/>
    </location>
</feature>
<feature type="region of interest" description="G4 motif" evidence="2">
    <location>
        <begin position="266"/>
        <end position="273"/>
    </location>
</feature>
<feature type="region of interest" description="G5 motif" evidence="2">
    <location>
        <begin position="325"/>
        <end position="330"/>
    </location>
</feature>
<feature type="compositionally biased region" description="Basic and acidic residues" evidence="3">
    <location>
        <begin position="1"/>
        <end position="14"/>
    </location>
</feature>
<feature type="binding site" evidence="1">
    <location>
        <begin position="40"/>
        <end position="47"/>
    </location>
    <ligand>
        <name>GTP</name>
        <dbReference type="ChEBI" id="CHEBI:37565"/>
    </ligand>
</feature>
<feature type="binding site" evidence="1">
    <location>
        <position position="47"/>
    </location>
    <ligand>
        <name>Mg(2+)</name>
        <dbReference type="ChEBI" id="CHEBI:18420"/>
    </ligand>
</feature>
<feature type="binding site" evidence="1">
    <location>
        <begin position="176"/>
        <end position="182"/>
    </location>
    <ligand>
        <name>GTP</name>
        <dbReference type="ChEBI" id="CHEBI:37565"/>
    </ligand>
</feature>
<feature type="binding site" evidence="1">
    <location>
        <position position="182"/>
    </location>
    <ligand>
        <name>Mg(2+)</name>
        <dbReference type="ChEBI" id="CHEBI:18420"/>
    </ligand>
</feature>
<feature type="binding site" evidence="1">
    <location>
        <begin position="201"/>
        <end position="205"/>
    </location>
    <ligand>
        <name>GTP</name>
        <dbReference type="ChEBI" id="CHEBI:37565"/>
    </ligand>
</feature>
<feature type="binding site" evidence="1">
    <location>
        <begin position="270"/>
        <end position="273"/>
    </location>
    <ligand>
        <name>GTP</name>
        <dbReference type="ChEBI" id="CHEBI:37565"/>
    </ligand>
</feature>
<feature type="binding site" evidence="1">
    <location>
        <position position="327"/>
    </location>
    <ligand>
        <name>GTP</name>
        <dbReference type="ChEBI" id="CHEBI:37565"/>
    </ligand>
</feature>
<feature type="modified residue" description="ADP-ribosylarginine; by cholera toxin" evidence="1">
    <location>
        <position position="179"/>
    </location>
</feature>
<feature type="lipid moiety-binding region" description="N-myristoyl glycine" evidence="1">
    <location>
        <position position="2"/>
    </location>
</feature>
<feature type="lipid moiety-binding region" description="S-palmitoyl cysteine" evidence="1">
    <location>
        <position position="3"/>
    </location>
</feature>
<feature type="sequence conflict" description="In Ref. 3." evidence="5" ref="3">
    <original>W</original>
    <variation>Y</variation>
    <location>
        <position position="132"/>
    </location>
</feature>
<feature type="sequence conflict" description="In Ref. 2; BAA14180." evidence="5" ref="2">
    <original>G</original>
    <variation>A</variation>
    <location>
        <position position="230"/>
    </location>
</feature>
<feature type="sequence conflict" description="In Ref. 3." evidence="5" ref="3">
    <original>D</original>
    <variation>N</variation>
    <location>
        <position position="273"/>
    </location>
</feature>
<feature type="strand" evidence="6">
    <location>
        <begin position="32"/>
        <end position="38"/>
    </location>
</feature>
<feature type="turn" evidence="6">
    <location>
        <begin position="42"/>
        <end position="44"/>
    </location>
</feature>
<feature type="helix" evidence="6">
    <location>
        <begin position="46"/>
        <end position="51"/>
    </location>
</feature>
<feature type="strand" evidence="6">
    <location>
        <begin position="186"/>
        <end position="194"/>
    </location>
</feature>
<feature type="strand" evidence="6">
    <location>
        <begin position="196"/>
        <end position="201"/>
    </location>
</feature>
<feature type="helix" evidence="6">
    <location>
        <begin position="209"/>
        <end position="211"/>
    </location>
</feature>
<feature type="helix" evidence="6">
    <location>
        <begin position="213"/>
        <end position="216"/>
    </location>
</feature>
<feature type="strand" evidence="6">
    <location>
        <begin position="220"/>
        <end position="228"/>
    </location>
</feature>
<feature type="strand" evidence="6">
    <location>
        <begin position="231"/>
        <end position="233"/>
    </location>
</feature>
<feature type="helix" evidence="6">
    <location>
        <begin position="243"/>
        <end position="255"/>
    </location>
</feature>
<feature type="strand" evidence="6">
    <location>
        <begin position="264"/>
        <end position="270"/>
    </location>
</feature>
<feature type="helix" evidence="6">
    <location>
        <begin position="272"/>
        <end position="278"/>
    </location>
</feature>
<feature type="turn" evidence="6">
    <location>
        <begin position="297"/>
        <end position="299"/>
    </location>
</feature>
<feature type="helix" evidence="6">
    <location>
        <begin position="300"/>
        <end position="310"/>
    </location>
</feature>
<feature type="strand" evidence="6">
    <location>
        <begin position="320"/>
        <end position="324"/>
    </location>
</feature>
<feature type="strand" evidence="6">
    <location>
        <begin position="327"/>
        <end position="330"/>
    </location>
</feature>
<feature type="helix" evidence="6">
    <location>
        <begin position="331"/>
        <end position="351"/>
    </location>
</feature>
<organism>
    <name type="scientific">Homo sapiens</name>
    <name type="common">Human</name>
    <dbReference type="NCBI Taxonomy" id="9606"/>
    <lineage>
        <taxon>Eukaryota</taxon>
        <taxon>Metazoa</taxon>
        <taxon>Chordata</taxon>
        <taxon>Craniata</taxon>
        <taxon>Vertebrata</taxon>
        <taxon>Euteleostomi</taxon>
        <taxon>Mammalia</taxon>
        <taxon>Eutheria</taxon>
        <taxon>Euarchontoglires</taxon>
        <taxon>Primates</taxon>
        <taxon>Haplorrhini</taxon>
        <taxon>Catarrhini</taxon>
        <taxon>Hominidae</taxon>
        <taxon>Homo</taxon>
    </lineage>
</organism>
<evidence type="ECO:0000250" key="1"/>
<evidence type="ECO:0000255" key="2">
    <source>
        <dbReference type="PROSITE-ProRule" id="PRU01230"/>
    </source>
</evidence>
<evidence type="ECO:0000256" key="3">
    <source>
        <dbReference type="SAM" id="MobiDB-lite"/>
    </source>
</evidence>
<evidence type="ECO:0000269" key="4">
    <source>
    </source>
</evidence>
<evidence type="ECO:0000305" key="5"/>
<evidence type="ECO:0007829" key="6">
    <source>
        <dbReference type="PDB" id="8DZS"/>
    </source>
</evidence>
<accession>P19086</accession>
<accession>B2R6C1</accession>
<accession>Q4QRJ6</accession>
<comment type="function">
    <text>Guanine nucleotide-binding proteins (G proteins) are involved as modulators or transducers in various transmembrane signaling systems.</text>
</comment>
<comment type="subunit">
    <text evidence="4">G-proteins are composed of 3 units; alpha, beta and gamma. The alpha chain contains the guanine nucleotide binding site. Interacts with ADGRB2 (PubMed:28891236).</text>
</comment>
<comment type="subcellular location">
    <subcellularLocation>
        <location>Membrane</location>
        <topology>Lipid-anchor</topology>
    </subcellularLocation>
</comment>
<comment type="similarity">
    <text evidence="5">Belongs to the G-alpha family. G(i/o/t/z) subfamily.</text>
</comment>
<protein>
    <recommendedName>
        <fullName>Guanine nucleotide-binding protein G(z) subunit alpha</fullName>
    </recommendedName>
    <alternativeName>
        <fullName>G(x) alpha chain</fullName>
    </alternativeName>
    <alternativeName>
        <fullName>Gz-alpha</fullName>
    </alternativeName>
</protein>
<sequence>MGCRQSSEEKEAARRSRRIDRHLRSESQRQRREIKLLLLGTSNSGKSTIVKQMKIIHSGGFNLEACKEYKPLIIYNAIDSLTRIIRALAALRIDFHNPDRAYDAVQLFALTGPAESKGEITPELLGVMRRLWADPGAQACFSRSSEYHLEDNAAYYLNDLERIAAADYIPTVEDILRSRDMTTGIVENKFTFKELTFKMVDVGGQRSERKKWIHCFEGVTAIIFCVELSGYDLKLYEDNQTSRMAESLRLFDSICNNNWFINTSLILFLNKKDLLAEKIRRIPLTICFPEYKGQNTYEEAAVYIQRQFEDLNRNKETKEIYSHFTCATDTSNIQFVFDAVTDVIIQNNLKYIGLC</sequence>
<gene>
    <name type="primary">GNAZ</name>
</gene>
<reference key="1">
    <citation type="journal article" date="1988" name="Proc. Natl. Acad. Sci. U.S.A.">
        <title>Identification of a GTP-binding protein alpha subunit that lacks an apparent ADP-ribosylation site for pertussis toxin.</title>
        <authorList>
            <person name="Fong H.K.W."/>
            <person name="Yoshimoto K.K."/>
            <person name="Eversole-Cire P."/>
            <person name="Simon M.I."/>
        </authorList>
    </citation>
    <scope>NUCLEOTIDE SEQUENCE [MRNA]</scope>
</reference>
<reference key="2">
    <citation type="journal article" date="1990" name="J. Biol. Chem.">
        <title>Characterization of the human gene for Gx alpha, a pertussis toxin-insensitive regulatory GTP-binding protein.</title>
        <authorList>
            <person name="Matsuoka M."/>
            <person name="Itoh H."/>
            <person name="Kaziro Y."/>
        </authorList>
    </citation>
    <scope>NUCLEOTIDE SEQUENCE [GENOMIC DNA]</scope>
</reference>
<reference key="3">
    <citation type="journal article" date="1991" name="Blood">
        <title>Identification of Gz alpha as a pertussis toxin-insensitive G protein in human platelets and megakaryocytes.</title>
        <authorList>
            <person name="Gagnon A.W."/>
            <person name="Manning D.R."/>
            <person name="Catani L."/>
            <person name="Gewirtz A."/>
            <person name="Poncz M."/>
            <person name="Brass L.F."/>
        </authorList>
    </citation>
    <scope>NUCLEOTIDE SEQUENCE [MRNA]</scope>
</reference>
<reference key="4">
    <citation type="submission" date="2002-03" db="EMBL/GenBank/DDBJ databases">
        <title>cDNA clones of human proteins involved in signal transduction sequenced by the Guthrie cDNA resource center (www.cdna.org).</title>
        <authorList>
            <person name="Puhl H.L. III"/>
            <person name="Ikeda S.R."/>
            <person name="Aronstam R.S."/>
        </authorList>
    </citation>
    <scope>NUCLEOTIDE SEQUENCE [LARGE SCALE MRNA]</scope>
    <source>
        <tissue>Brain</tissue>
    </source>
</reference>
<reference key="5">
    <citation type="journal article" date="2004" name="Genome Biol.">
        <title>A genome annotation-driven approach to cloning the human ORFeome.</title>
        <authorList>
            <person name="Collins J.E."/>
            <person name="Wright C.L."/>
            <person name="Edwards C.A."/>
            <person name="Davis M.P."/>
            <person name="Grinham J.A."/>
            <person name="Cole C.G."/>
            <person name="Goward M.E."/>
            <person name="Aguado B."/>
            <person name="Mallya M."/>
            <person name="Mokrab Y."/>
            <person name="Huckle E.J."/>
            <person name="Beare D.M."/>
            <person name="Dunham I."/>
        </authorList>
    </citation>
    <scope>NUCLEOTIDE SEQUENCE [LARGE SCALE MRNA]</scope>
</reference>
<reference key="6">
    <citation type="journal article" date="2004" name="Nat. Genet.">
        <title>Complete sequencing and characterization of 21,243 full-length human cDNAs.</title>
        <authorList>
            <person name="Ota T."/>
            <person name="Suzuki Y."/>
            <person name="Nishikawa T."/>
            <person name="Otsuki T."/>
            <person name="Sugiyama T."/>
            <person name="Irie R."/>
            <person name="Wakamatsu A."/>
            <person name="Hayashi K."/>
            <person name="Sato H."/>
            <person name="Nagai K."/>
            <person name="Kimura K."/>
            <person name="Makita H."/>
            <person name="Sekine M."/>
            <person name="Obayashi M."/>
            <person name="Nishi T."/>
            <person name="Shibahara T."/>
            <person name="Tanaka T."/>
            <person name="Ishii S."/>
            <person name="Yamamoto J."/>
            <person name="Saito K."/>
            <person name="Kawai Y."/>
            <person name="Isono Y."/>
            <person name="Nakamura Y."/>
            <person name="Nagahari K."/>
            <person name="Murakami K."/>
            <person name="Yasuda T."/>
            <person name="Iwayanagi T."/>
            <person name="Wagatsuma M."/>
            <person name="Shiratori A."/>
            <person name="Sudo H."/>
            <person name="Hosoiri T."/>
            <person name="Kaku Y."/>
            <person name="Kodaira H."/>
            <person name="Kondo H."/>
            <person name="Sugawara M."/>
            <person name="Takahashi M."/>
            <person name="Kanda K."/>
            <person name="Yokoi T."/>
            <person name="Furuya T."/>
            <person name="Kikkawa E."/>
            <person name="Omura Y."/>
            <person name="Abe K."/>
            <person name="Kamihara K."/>
            <person name="Katsuta N."/>
            <person name="Sato K."/>
            <person name="Tanikawa M."/>
            <person name="Yamazaki M."/>
            <person name="Ninomiya K."/>
            <person name="Ishibashi T."/>
            <person name="Yamashita H."/>
            <person name="Murakawa K."/>
            <person name="Fujimori K."/>
            <person name="Tanai H."/>
            <person name="Kimata M."/>
            <person name="Watanabe M."/>
            <person name="Hiraoka S."/>
            <person name="Chiba Y."/>
            <person name="Ishida S."/>
            <person name="Ono Y."/>
            <person name="Takiguchi S."/>
            <person name="Watanabe S."/>
            <person name="Yosida M."/>
            <person name="Hotuta T."/>
            <person name="Kusano J."/>
            <person name="Kanehori K."/>
            <person name="Takahashi-Fujii A."/>
            <person name="Hara H."/>
            <person name="Tanase T.-O."/>
            <person name="Nomura Y."/>
            <person name="Togiya S."/>
            <person name="Komai F."/>
            <person name="Hara R."/>
            <person name="Takeuchi K."/>
            <person name="Arita M."/>
            <person name="Imose N."/>
            <person name="Musashino K."/>
            <person name="Yuuki H."/>
            <person name="Oshima A."/>
            <person name="Sasaki N."/>
            <person name="Aotsuka S."/>
            <person name="Yoshikawa Y."/>
            <person name="Matsunawa H."/>
            <person name="Ichihara T."/>
            <person name="Shiohata N."/>
            <person name="Sano S."/>
            <person name="Moriya S."/>
            <person name="Momiyama H."/>
            <person name="Satoh N."/>
            <person name="Takami S."/>
            <person name="Terashima Y."/>
            <person name="Suzuki O."/>
            <person name="Nakagawa S."/>
            <person name="Senoh A."/>
            <person name="Mizoguchi H."/>
            <person name="Goto Y."/>
            <person name="Shimizu F."/>
            <person name="Wakebe H."/>
            <person name="Hishigaki H."/>
            <person name="Watanabe T."/>
            <person name="Sugiyama A."/>
            <person name="Takemoto M."/>
            <person name="Kawakami B."/>
            <person name="Yamazaki M."/>
            <person name="Watanabe K."/>
            <person name="Kumagai A."/>
            <person name="Itakura S."/>
            <person name="Fukuzumi Y."/>
            <person name="Fujimori Y."/>
            <person name="Komiyama M."/>
            <person name="Tashiro H."/>
            <person name="Tanigami A."/>
            <person name="Fujiwara T."/>
            <person name="Ono T."/>
            <person name="Yamada K."/>
            <person name="Fujii Y."/>
            <person name="Ozaki K."/>
            <person name="Hirao M."/>
            <person name="Ohmori Y."/>
            <person name="Kawabata A."/>
            <person name="Hikiji T."/>
            <person name="Kobatake N."/>
            <person name="Inagaki H."/>
            <person name="Ikema Y."/>
            <person name="Okamoto S."/>
            <person name="Okitani R."/>
            <person name="Kawakami T."/>
            <person name="Noguchi S."/>
            <person name="Itoh T."/>
            <person name="Shigeta K."/>
            <person name="Senba T."/>
            <person name="Matsumura K."/>
            <person name="Nakajima Y."/>
            <person name="Mizuno T."/>
            <person name="Morinaga M."/>
            <person name="Sasaki M."/>
            <person name="Togashi T."/>
            <person name="Oyama M."/>
            <person name="Hata H."/>
            <person name="Watanabe M."/>
            <person name="Komatsu T."/>
            <person name="Mizushima-Sugano J."/>
            <person name="Satoh T."/>
            <person name="Shirai Y."/>
            <person name="Takahashi Y."/>
            <person name="Nakagawa K."/>
            <person name="Okumura K."/>
            <person name="Nagase T."/>
            <person name="Nomura N."/>
            <person name="Kikuchi H."/>
            <person name="Masuho Y."/>
            <person name="Yamashita R."/>
            <person name="Nakai K."/>
            <person name="Yada T."/>
            <person name="Nakamura Y."/>
            <person name="Ohara O."/>
            <person name="Isogai T."/>
            <person name="Sugano S."/>
        </authorList>
    </citation>
    <scope>NUCLEOTIDE SEQUENCE [LARGE SCALE MRNA]</scope>
    <source>
        <tissue>Thalamus</tissue>
    </source>
</reference>
<reference key="7">
    <citation type="submission" date="2005-07" db="EMBL/GenBank/DDBJ databases">
        <authorList>
            <person name="Mural R.J."/>
            <person name="Istrail S."/>
            <person name="Sutton G.G."/>
            <person name="Florea L."/>
            <person name="Halpern A.L."/>
            <person name="Mobarry C.M."/>
            <person name="Lippert R."/>
            <person name="Walenz B."/>
            <person name="Shatkay H."/>
            <person name="Dew I."/>
            <person name="Miller J.R."/>
            <person name="Flanigan M.J."/>
            <person name="Edwards N.J."/>
            <person name="Bolanos R."/>
            <person name="Fasulo D."/>
            <person name="Halldorsson B.V."/>
            <person name="Hannenhalli S."/>
            <person name="Turner R."/>
            <person name="Yooseph S."/>
            <person name="Lu F."/>
            <person name="Nusskern D.R."/>
            <person name="Shue B.C."/>
            <person name="Zheng X.H."/>
            <person name="Zhong F."/>
            <person name="Delcher A.L."/>
            <person name="Huson D.H."/>
            <person name="Kravitz S.A."/>
            <person name="Mouchard L."/>
            <person name="Reinert K."/>
            <person name="Remington K.A."/>
            <person name="Clark A.G."/>
            <person name="Waterman M.S."/>
            <person name="Eichler E.E."/>
            <person name="Adams M.D."/>
            <person name="Hunkapiller M.W."/>
            <person name="Myers E.W."/>
            <person name="Venter J.C."/>
        </authorList>
    </citation>
    <scope>NUCLEOTIDE SEQUENCE [LARGE SCALE GENOMIC DNA]</scope>
</reference>
<reference key="8">
    <citation type="journal article" date="2004" name="Genome Res.">
        <title>The status, quality, and expansion of the NIH full-length cDNA project: the Mammalian Gene Collection (MGC).</title>
        <authorList>
            <consortium name="The MGC Project Team"/>
        </authorList>
    </citation>
    <scope>NUCLEOTIDE SEQUENCE [LARGE SCALE MRNA]</scope>
    <source>
        <tissue>PNS</tissue>
    </source>
</reference>
<reference key="9">
    <citation type="journal article" date="2017" name="Hum. Mutat.">
        <title>A disease-associated mutation in the adhesion GPCR BAI2 (ADGRB2) increases receptor signaling activity.</title>
        <authorList>
            <person name="Purcell R.H."/>
            <person name="Toro C."/>
            <person name="Gahl W.A."/>
            <person name="Hall R.A."/>
        </authorList>
    </citation>
    <scope>INTERACTION WITH ADGRB2</scope>
</reference>
<proteinExistence type="evidence at protein level"/>
<name>GNAZ_HUMAN</name>
<keyword id="KW-0002">3D-structure</keyword>
<keyword id="KW-0013">ADP-ribosylation</keyword>
<keyword id="KW-0342">GTP-binding</keyword>
<keyword id="KW-0449">Lipoprotein</keyword>
<keyword id="KW-0460">Magnesium</keyword>
<keyword id="KW-0472">Membrane</keyword>
<keyword id="KW-0479">Metal-binding</keyword>
<keyword id="KW-0519">Myristate</keyword>
<keyword id="KW-0547">Nucleotide-binding</keyword>
<keyword id="KW-0564">Palmitate</keyword>
<keyword id="KW-1267">Proteomics identification</keyword>
<keyword id="KW-1185">Reference proteome</keyword>
<keyword id="KW-0807">Transducer</keyword>
<dbReference type="EMBL" id="J03260">
    <property type="protein sequence ID" value="AAA52580.1"/>
    <property type="molecule type" value="mRNA"/>
</dbReference>
<dbReference type="EMBL" id="D90150">
    <property type="protein sequence ID" value="BAA14180.1"/>
    <property type="molecule type" value="Genomic_DNA"/>
</dbReference>
<dbReference type="EMBL" id="AF493899">
    <property type="protein sequence ID" value="AAM12613.1"/>
    <property type="molecule type" value="mRNA"/>
</dbReference>
<dbReference type="EMBL" id="CR456495">
    <property type="protein sequence ID" value="CAG30381.1"/>
    <property type="molecule type" value="mRNA"/>
</dbReference>
<dbReference type="EMBL" id="AK312519">
    <property type="protein sequence ID" value="BAG35418.1"/>
    <property type="molecule type" value="mRNA"/>
</dbReference>
<dbReference type="EMBL" id="CH471095">
    <property type="protein sequence ID" value="EAW59559.1"/>
    <property type="molecule type" value="Genomic_DNA"/>
</dbReference>
<dbReference type="EMBL" id="BC078163">
    <property type="protein sequence ID" value="AAH78163.1"/>
    <property type="molecule type" value="mRNA"/>
</dbReference>
<dbReference type="EMBL" id="BC096828">
    <property type="protein sequence ID" value="AAH96828.1"/>
    <property type="molecule type" value="mRNA"/>
</dbReference>
<dbReference type="CCDS" id="CCDS13804.1"/>
<dbReference type="PIR" id="A36628">
    <property type="entry name" value="RGHUGX"/>
</dbReference>
<dbReference type="RefSeq" id="NP_002064.1">
    <property type="nucleotide sequence ID" value="NM_002073.4"/>
</dbReference>
<dbReference type="PDB" id="8DZS">
    <property type="method" value="EM"/>
    <property type="resolution" value="2.65 A"/>
    <property type="chains" value="B=30-355"/>
</dbReference>
<dbReference type="PDBsum" id="8DZS"/>
<dbReference type="EMDB" id="EMD-27807"/>
<dbReference type="SMR" id="P19086"/>
<dbReference type="BioGRID" id="109043">
    <property type="interactions" value="83"/>
</dbReference>
<dbReference type="ELM" id="P19086"/>
<dbReference type="FunCoup" id="P19086">
    <property type="interactions" value="717"/>
</dbReference>
<dbReference type="IntAct" id="P19086">
    <property type="interactions" value="61"/>
</dbReference>
<dbReference type="MINT" id="P19086"/>
<dbReference type="STRING" id="9606.ENSP00000478892"/>
<dbReference type="iPTMnet" id="P19086"/>
<dbReference type="PhosphoSitePlus" id="P19086"/>
<dbReference type="SwissPalm" id="P19086"/>
<dbReference type="BioMuta" id="GNAZ"/>
<dbReference type="DMDM" id="121005"/>
<dbReference type="jPOST" id="P19086"/>
<dbReference type="MassIVE" id="P19086"/>
<dbReference type="PaxDb" id="9606-ENSP00000478892"/>
<dbReference type="PeptideAtlas" id="P19086"/>
<dbReference type="ProteomicsDB" id="53630"/>
<dbReference type="Pumba" id="P19086"/>
<dbReference type="Antibodypedia" id="222">
    <property type="antibodies" value="338 antibodies from 30 providers"/>
</dbReference>
<dbReference type="DNASU" id="2781"/>
<dbReference type="Ensembl" id="ENST00000615612.2">
    <property type="protein sequence ID" value="ENSP00000478892.1"/>
    <property type="gene ID" value="ENSG00000128266.9"/>
</dbReference>
<dbReference type="GeneID" id="2781"/>
<dbReference type="KEGG" id="hsa:2781"/>
<dbReference type="MANE-Select" id="ENST00000615612.2">
    <property type="protein sequence ID" value="ENSP00000478892.1"/>
    <property type="RefSeq nucleotide sequence ID" value="NM_002073.4"/>
    <property type="RefSeq protein sequence ID" value="NP_002064.1"/>
</dbReference>
<dbReference type="UCSC" id="uc002zwu.2">
    <property type="organism name" value="human"/>
</dbReference>
<dbReference type="AGR" id="HGNC:4395"/>
<dbReference type="CTD" id="2781"/>
<dbReference type="DisGeNET" id="2781"/>
<dbReference type="GeneCards" id="GNAZ"/>
<dbReference type="HGNC" id="HGNC:4395">
    <property type="gene designation" value="GNAZ"/>
</dbReference>
<dbReference type="HPA" id="ENSG00000128266">
    <property type="expression patterns" value="Tissue enhanced (brain)"/>
</dbReference>
<dbReference type="MIM" id="139160">
    <property type="type" value="gene"/>
</dbReference>
<dbReference type="neXtProt" id="NX_P19086"/>
<dbReference type="OpenTargets" id="ENSG00000128266"/>
<dbReference type="PharmGKB" id="PA28775"/>
<dbReference type="VEuPathDB" id="HostDB:ENSG00000128266"/>
<dbReference type="eggNOG" id="KOG0082">
    <property type="taxonomic scope" value="Eukaryota"/>
</dbReference>
<dbReference type="GeneTree" id="ENSGT00940000160353"/>
<dbReference type="HOGENOM" id="CLU_014184_6_0_1"/>
<dbReference type="InParanoid" id="P19086"/>
<dbReference type="OMA" id="ANSHWFK"/>
<dbReference type="OrthoDB" id="5817230at2759"/>
<dbReference type="PAN-GO" id="P19086">
    <property type="GO annotations" value="5 GO annotations based on evolutionary models"/>
</dbReference>
<dbReference type="PhylomeDB" id="P19086"/>
<dbReference type="TreeFam" id="TF300673"/>
<dbReference type="PathwayCommons" id="P19086"/>
<dbReference type="Reactome" id="R-HSA-418555">
    <property type="pathway name" value="G alpha (s) signalling events"/>
</dbReference>
<dbReference type="Reactome" id="R-HSA-418594">
    <property type="pathway name" value="G alpha (i) signalling events"/>
</dbReference>
<dbReference type="Reactome" id="R-HSA-418597">
    <property type="pathway name" value="G alpha (z) signalling events"/>
</dbReference>
<dbReference type="Reactome" id="R-HSA-9634597">
    <property type="pathway name" value="GPER1 signaling"/>
</dbReference>
<dbReference type="Reactome" id="R-HSA-9660821">
    <property type="pathway name" value="ADORA2B mediated anti-inflammatory cytokines production"/>
</dbReference>
<dbReference type="SignaLink" id="P19086"/>
<dbReference type="SIGNOR" id="P19086"/>
<dbReference type="BioGRID-ORCS" id="2781">
    <property type="hits" value="17 hits in 1145 CRISPR screens"/>
</dbReference>
<dbReference type="CD-CODE" id="FB4E32DD">
    <property type="entry name" value="Presynaptic clusters and postsynaptic densities"/>
</dbReference>
<dbReference type="ChiTaRS" id="GNAZ">
    <property type="organism name" value="human"/>
</dbReference>
<dbReference type="GeneWiki" id="GNAZ"/>
<dbReference type="GenomeRNAi" id="2781"/>
<dbReference type="Pharos" id="P19086">
    <property type="development level" value="Tbio"/>
</dbReference>
<dbReference type="PRO" id="PR:P19086"/>
<dbReference type="Proteomes" id="UP000005640">
    <property type="component" value="Chromosome 22"/>
</dbReference>
<dbReference type="RNAct" id="P19086">
    <property type="molecule type" value="protein"/>
</dbReference>
<dbReference type="Bgee" id="ENSG00000128266">
    <property type="expression patterns" value="Expressed in cortical plate and 143 other cell types or tissues"/>
</dbReference>
<dbReference type="GO" id="GO:0044297">
    <property type="term" value="C:cell body"/>
    <property type="evidence" value="ECO:0007669"/>
    <property type="project" value="Ensembl"/>
</dbReference>
<dbReference type="GO" id="GO:0005737">
    <property type="term" value="C:cytoplasm"/>
    <property type="evidence" value="ECO:0000318"/>
    <property type="project" value="GO_Central"/>
</dbReference>
<dbReference type="GO" id="GO:0030425">
    <property type="term" value="C:dendrite"/>
    <property type="evidence" value="ECO:0007669"/>
    <property type="project" value="Ensembl"/>
</dbReference>
<dbReference type="GO" id="GO:0005783">
    <property type="term" value="C:endoplasmic reticulum"/>
    <property type="evidence" value="ECO:0000304"/>
    <property type="project" value="ProtInc"/>
</dbReference>
<dbReference type="GO" id="GO:0005834">
    <property type="term" value="C:heterotrimeric G-protein complex"/>
    <property type="evidence" value="ECO:0000318"/>
    <property type="project" value="GO_Central"/>
</dbReference>
<dbReference type="GO" id="GO:0005635">
    <property type="term" value="C:nuclear envelope"/>
    <property type="evidence" value="ECO:0000304"/>
    <property type="project" value="ProtInc"/>
</dbReference>
<dbReference type="GO" id="GO:0005886">
    <property type="term" value="C:plasma membrane"/>
    <property type="evidence" value="ECO:0000304"/>
    <property type="project" value="Reactome"/>
</dbReference>
<dbReference type="GO" id="GO:0045202">
    <property type="term" value="C:synapse"/>
    <property type="evidence" value="ECO:0007669"/>
    <property type="project" value="Ensembl"/>
</dbReference>
<dbReference type="GO" id="GO:0010855">
    <property type="term" value="F:adenylate cyclase inhibitor activity"/>
    <property type="evidence" value="ECO:0007669"/>
    <property type="project" value="Ensembl"/>
</dbReference>
<dbReference type="GO" id="GO:0001664">
    <property type="term" value="F:G protein-coupled receptor binding"/>
    <property type="evidence" value="ECO:0000318"/>
    <property type="project" value="GO_Central"/>
</dbReference>
<dbReference type="GO" id="GO:0031821">
    <property type="term" value="F:G protein-coupled serotonin receptor binding"/>
    <property type="evidence" value="ECO:0007669"/>
    <property type="project" value="Ensembl"/>
</dbReference>
<dbReference type="GO" id="GO:0031683">
    <property type="term" value="F:G-protein beta/gamma-subunit complex binding"/>
    <property type="evidence" value="ECO:0000318"/>
    <property type="project" value="GO_Central"/>
</dbReference>
<dbReference type="GO" id="GO:0005525">
    <property type="term" value="F:GTP binding"/>
    <property type="evidence" value="ECO:0007669"/>
    <property type="project" value="UniProtKB-KW"/>
</dbReference>
<dbReference type="GO" id="GO:0003924">
    <property type="term" value="F:GTPase activity"/>
    <property type="evidence" value="ECO:0000318"/>
    <property type="project" value="GO_Central"/>
</dbReference>
<dbReference type="GO" id="GO:0046872">
    <property type="term" value="F:metal ion binding"/>
    <property type="evidence" value="ECO:0007669"/>
    <property type="project" value="UniProtKB-KW"/>
</dbReference>
<dbReference type="GO" id="GO:0007193">
    <property type="term" value="P:adenylate cyclase-inhibiting G protein-coupled receptor signaling pathway"/>
    <property type="evidence" value="ECO:0007669"/>
    <property type="project" value="Ensembl"/>
</dbReference>
<dbReference type="GO" id="GO:0007188">
    <property type="term" value="P:adenylate cyclase-modulating G protein-coupled receptor signaling pathway"/>
    <property type="evidence" value="ECO:0000318"/>
    <property type="project" value="GO_Central"/>
</dbReference>
<dbReference type="GO" id="GO:0007186">
    <property type="term" value="P:G protein-coupled receptor signaling pathway"/>
    <property type="evidence" value="ECO:0000304"/>
    <property type="project" value="ProtInc"/>
</dbReference>
<dbReference type="GO" id="GO:0098664">
    <property type="term" value="P:G protein-coupled serotonin receptor signaling pathway"/>
    <property type="evidence" value="ECO:0007669"/>
    <property type="project" value="Ensembl"/>
</dbReference>
<dbReference type="GO" id="GO:0046676">
    <property type="term" value="P:negative regulation of insulin secretion"/>
    <property type="evidence" value="ECO:0007669"/>
    <property type="project" value="Ensembl"/>
</dbReference>
<dbReference type="CDD" id="cd00066">
    <property type="entry name" value="G-alpha"/>
    <property type="match status" value="1"/>
</dbReference>
<dbReference type="FunFam" id="3.40.50.300:FF:002307">
    <property type="entry name" value="Guanine nucleotide-binding protein G(k) subunit alpha"/>
    <property type="match status" value="1"/>
</dbReference>
<dbReference type="FunFam" id="1.10.400.10:FF:000006">
    <property type="entry name" value="Guanine nucleotide-binding protein G(Z) subunit alpha"/>
    <property type="match status" value="1"/>
</dbReference>
<dbReference type="Gene3D" id="1.10.400.10">
    <property type="entry name" value="GI Alpha 1, domain 2-like"/>
    <property type="match status" value="1"/>
</dbReference>
<dbReference type="Gene3D" id="3.40.50.300">
    <property type="entry name" value="P-loop containing nucleotide triphosphate hydrolases"/>
    <property type="match status" value="1"/>
</dbReference>
<dbReference type="InterPro" id="IPR001408">
    <property type="entry name" value="Gprotein_alpha_I"/>
</dbReference>
<dbReference type="InterPro" id="IPR001019">
    <property type="entry name" value="Gprotein_alpha_su"/>
</dbReference>
<dbReference type="InterPro" id="IPR011025">
    <property type="entry name" value="GproteinA_insert"/>
</dbReference>
<dbReference type="InterPro" id="IPR027417">
    <property type="entry name" value="P-loop_NTPase"/>
</dbReference>
<dbReference type="PANTHER" id="PTHR10218">
    <property type="entry name" value="GTP-BINDING PROTEIN ALPHA SUBUNIT"/>
    <property type="match status" value="1"/>
</dbReference>
<dbReference type="PANTHER" id="PTHR10218:SF65">
    <property type="entry name" value="GUANINE NUCLEOTIDE-BINDING PROTEIN G(Z) SUBUNIT ALPHA"/>
    <property type="match status" value="1"/>
</dbReference>
<dbReference type="Pfam" id="PF00503">
    <property type="entry name" value="G-alpha"/>
    <property type="match status" value="1"/>
</dbReference>
<dbReference type="PRINTS" id="PR00318">
    <property type="entry name" value="GPROTEINA"/>
</dbReference>
<dbReference type="PRINTS" id="PR00441">
    <property type="entry name" value="GPROTEINAI"/>
</dbReference>
<dbReference type="SMART" id="SM00275">
    <property type="entry name" value="G_alpha"/>
    <property type="match status" value="1"/>
</dbReference>
<dbReference type="SUPFAM" id="SSF52540">
    <property type="entry name" value="P-loop containing nucleoside triphosphate hydrolases"/>
    <property type="match status" value="1"/>
</dbReference>
<dbReference type="SUPFAM" id="SSF47895">
    <property type="entry name" value="Transducin (alpha subunit), insertion domain"/>
    <property type="match status" value="1"/>
</dbReference>
<dbReference type="PROSITE" id="PS51882">
    <property type="entry name" value="G_ALPHA"/>
    <property type="match status" value="1"/>
</dbReference>